<keyword id="KW-0004">4Fe-4S</keyword>
<keyword id="KW-0067">ATP-binding</keyword>
<keyword id="KW-0963">Cytoplasm</keyword>
<keyword id="KW-0408">Iron</keyword>
<keyword id="KW-0411">Iron-sulfur</keyword>
<keyword id="KW-0460">Magnesium</keyword>
<keyword id="KW-0479">Metal-binding</keyword>
<keyword id="KW-0547">Nucleotide-binding</keyword>
<keyword id="KW-0694">RNA-binding</keyword>
<keyword id="KW-0808">Transferase</keyword>
<keyword id="KW-0819">tRNA processing</keyword>
<keyword id="KW-0820">tRNA-binding</keyword>
<feature type="chain" id="PRO_1000188664" description="tRNA-cytidine(32) 2-sulfurtransferase">
    <location>
        <begin position="1"/>
        <end position="307"/>
    </location>
</feature>
<feature type="short sequence motif" description="PP-loop motif" evidence="1">
    <location>
        <begin position="44"/>
        <end position="49"/>
    </location>
</feature>
<feature type="binding site" evidence="1">
    <location>
        <position position="119"/>
    </location>
    <ligand>
        <name>[4Fe-4S] cluster</name>
        <dbReference type="ChEBI" id="CHEBI:49883"/>
    </ligand>
</feature>
<feature type="binding site" evidence="1">
    <location>
        <position position="122"/>
    </location>
    <ligand>
        <name>[4Fe-4S] cluster</name>
        <dbReference type="ChEBI" id="CHEBI:49883"/>
    </ligand>
</feature>
<feature type="binding site" evidence="1">
    <location>
        <position position="210"/>
    </location>
    <ligand>
        <name>[4Fe-4S] cluster</name>
        <dbReference type="ChEBI" id="CHEBI:49883"/>
    </ligand>
</feature>
<proteinExistence type="inferred from homology"/>
<protein>
    <recommendedName>
        <fullName evidence="1">tRNA-cytidine(32) 2-sulfurtransferase</fullName>
        <ecNumber evidence="1">2.8.1.-</ecNumber>
    </recommendedName>
    <alternativeName>
        <fullName evidence="1">Two-thiocytidine biosynthesis protein A</fullName>
    </alternativeName>
    <alternativeName>
        <fullName evidence="1">tRNA 2-thiocytidine biosynthesis protein TtcA</fullName>
    </alternativeName>
</protein>
<accession>B5FE41</accession>
<dbReference type="EC" id="2.8.1.-" evidence="1"/>
<dbReference type="EMBL" id="CP001139">
    <property type="protein sequence ID" value="ACH65977.1"/>
    <property type="molecule type" value="Genomic_DNA"/>
</dbReference>
<dbReference type="RefSeq" id="WP_011261911.1">
    <property type="nucleotide sequence ID" value="NC_011184.1"/>
</dbReference>
<dbReference type="SMR" id="B5FE41"/>
<dbReference type="GeneID" id="54163981"/>
<dbReference type="KEGG" id="vfm:VFMJ11_1387"/>
<dbReference type="HOGENOM" id="CLU_026481_0_0_6"/>
<dbReference type="Proteomes" id="UP000001857">
    <property type="component" value="Chromosome I"/>
</dbReference>
<dbReference type="GO" id="GO:0005737">
    <property type="term" value="C:cytoplasm"/>
    <property type="evidence" value="ECO:0007669"/>
    <property type="project" value="UniProtKB-SubCell"/>
</dbReference>
<dbReference type="GO" id="GO:0051539">
    <property type="term" value="F:4 iron, 4 sulfur cluster binding"/>
    <property type="evidence" value="ECO:0007669"/>
    <property type="project" value="UniProtKB-UniRule"/>
</dbReference>
<dbReference type="GO" id="GO:0005524">
    <property type="term" value="F:ATP binding"/>
    <property type="evidence" value="ECO:0007669"/>
    <property type="project" value="UniProtKB-UniRule"/>
</dbReference>
<dbReference type="GO" id="GO:0000287">
    <property type="term" value="F:magnesium ion binding"/>
    <property type="evidence" value="ECO:0007669"/>
    <property type="project" value="UniProtKB-UniRule"/>
</dbReference>
<dbReference type="GO" id="GO:0016783">
    <property type="term" value="F:sulfurtransferase activity"/>
    <property type="evidence" value="ECO:0007669"/>
    <property type="project" value="UniProtKB-UniRule"/>
</dbReference>
<dbReference type="GO" id="GO:0000049">
    <property type="term" value="F:tRNA binding"/>
    <property type="evidence" value="ECO:0007669"/>
    <property type="project" value="UniProtKB-KW"/>
</dbReference>
<dbReference type="GO" id="GO:0034227">
    <property type="term" value="P:tRNA thio-modification"/>
    <property type="evidence" value="ECO:0007669"/>
    <property type="project" value="UniProtKB-UniRule"/>
</dbReference>
<dbReference type="CDD" id="cd24138">
    <property type="entry name" value="TtcA-like"/>
    <property type="match status" value="1"/>
</dbReference>
<dbReference type="Gene3D" id="3.40.50.620">
    <property type="entry name" value="HUPs"/>
    <property type="match status" value="1"/>
</dbReference>
<dbReference type="HAMAP" id="MF_01850">
    <property type="entry name" value="TtcA"/>
    <property type="match status" value="1"/>
</dbReference>
<dbReference type="InterPro" id="IPR014729">
    <property type="entry name" value="Rossmann-like_a/b/a_fold"/>
</dbReference>
<dbReference type="InterPro" id="IPR011063">
    <property type="entry name" value="TilS/TtcA_N"/>
</dbReference>
<dbReference type="InterPro" id="IPR012089">
    <property type="entry name" value="tRNA_Cyd_32_2_STrfase"/>
</dbReference>
<dbReference type="InterPro" id="IPR035107">
    <property type="entry name" value="tRNA_thiolation_TtcA_Ctu1"/>
</dbReference>
<dbReference type="NCBIfam" id="NF007972">
    <property type="entry name" value="PRK10696.1"/>
    <property type="match status" value="1"/>
</dbReference>
<dbReference type="PANTHER" id="PTHR43686:SF1">
    <property type="entry name" value="AMINOTRAN_5 DOMAIN-CONTAINING PROTEIN"/>
    <property type="match status" value="1"/>
</dbReference>
<dbReference type="PANTHER" id="PTHR43686">
    <property type="entry name" value="SULFURTRANSFERASE-RELATED"/>
    <property type="match status" value="1"/>
</dbReference>
<dbReference type="Pfam" id="PF01171">
    <property type="entry name" value="ATP_bind_3"/>
    <property type="match status" value="1"/>
</dbReference>
<dbReference type="PIRSF" id="PIRSF004976">
    <property type="entry name" value="ATPase_YdaO"/>
    <property type="match status" value="1"/>
</dbReference>
<dbReference type="SUPFAM" id="SSF52402">
    <property type="entry name" value="Adenine nucleotide alpha hydrolases-like"/>
    <property type="match status" value="1"/>
</dbReference>
<name>TTCA_ALIFM</name>
<organism>
    <name type="scientific">Aliivibrio fischeri (strain MJ11)</name>
    <name type="common">Vibrio fischeri</name>
    <dbReference type="NCBI Taxonomy" id="388396"/>
    <lineage>
        <taxon>Bacteria</taxon>
        <taxon>Pseudomonadati</taxon>
        <taxon>Pseudomonadota</taxon>
        <taxon>Gammaproteobacteria</taxon>
        <taxon>Vibrionales</taxon>
        <taxon>Vibrionaceae</taxon>
        <taxon>Aliivibrio</taxon>
    </lineage>
</organism>
<gene>
    <name evidence="1" type="primary">ttcA</name>
    <name type="ordered locus">VFMJ11_1387</name>
</gene>
<comment type="function">
    <text evidence="1">Catalyzes the ATP-dependent 2-thiolation of cytidine in position 32 of tRNA, to form 2-thiocytidine (s(2)C32). The sulfur atoms are provided by the cysteine/cysteine desulfurase (IscS) system.</text>
</comment>
<comment type="catalytic activity">
    <reaction evidence="1">
        <text>cytidine(32) in tRNA + S-sulfanyl-L-cysteinyl-[cysteine desulfurase] + AH2 + ATP = 2-thiocytidine(32) in tRNA + L-cysteinyl-[cysteine desulfurase] + A + AMP + diphosphate + H(+)</text>
        <dbReference type="Rhea" id="RHEA:57048"/>
        <dbReference type="Rhea" id="RHEA-COMP:10288"/>
        <dbReference type="Rhea" id="RHEA-COMP:12157"/>
        <dbReference type="Rhea" id="RHEA-COMP:12158"/>
        <dbReference type="Rhea" id="RHEA-COMP:14821"/>
        <dbReference type="ChEBI" id="CHEBI:13193"/>
        <dbReference type="ChEBI" id="CHEBI:15378"/>
        <dbReference type="ChEBI" id="CHEBI:17499"/>
        <dbReference type="ChEBI" id="CHEBI:29950"/>
        <dbReference type="ChEBI" id="CHEBI:30616"/>
        <dbReference type="ChEBI" id="CHEBI:33019"/>
        <dbReference type="ChEBI" id="CHEBI:61963"/>
        <dbReference type="ChEBI" id="CHEBI:82748"/>
        <dbReference type="ChEBI" id="CHEBI:141453"/>
        <dbReference type="ChEBI" id="CHEBI:456215"/>
    </reaction>
    <physiologicalReaction direction="left-to-right" evidence="1">
        <dbReference type="Rhea" id="RHEA:57049"/>
    </physiologicalReaction>
</comment>
<comment type="cofactor">
    <cofactor evidence="1">
        <name>Mg(2+)</name>
        <dbReference type="ChEBI" id="CHEBI:18420"/>
    </cofactor>
</comment>
<comment type="cofactor">
    <cofactor evidence="1">
        <name>[4Fe-4S] cluster</name>
        <dbReference type="ChEBI" id="CHEBI:49883"/>
    </cofactor>
    <text evidence="1">Binds 1 [4Fe-4S] cluster per subunit. The cluster is chelated by three Cys residues, the fourth Fe has a free coordination site that may bind a sulfur atom transferred from the persulfide of IscS.</text>
</comment>
<comment type="pathway">
    <text evidence="1">tRNA modification.</text>
</comment>
<comment type="subunit">
    <text evidence="1">Homodimer.</text>
</comment>
<comment type="subcellular location">
    <subcellularLocation>
        <location evidence="1">Cytoplasm</location>
    </subcellularLocation>
</comment>
<comment type="miscellaneous">
    <text evidence="1">The thiolation reaction likely consists of two steps: a first activation step by ATP to form an adenylated intermediate of the target base of tRNA, and a second nucleophilic substitution step of the sulfur (S) atom supplied by the hydrosulfide attached to the Fe-S cluster.</text>
</comment>
<comment type="similarity">
    <text evidence="1">Belongs to the TtcA family.</text>
</comment>
<reference key="1">
    <citation type="submission" date="2008-08" db="EMBL/GenBank/DDBJ databases">
        <title>Complete sequence of Vibrio fischeri strain MJ11.</title>
        <authorList>
            <person name="Mandel M.J."/>
            <person name="Stabb E.V."/>
            <person name="Ruby E.G."/>
            <person name="Ferriera S."/>
            <person name="Johnson J."/>
            <person name="Kravitz S."/>
            <person name="Beeson K."/>
            <person name="Sutton G."/>
            <person name="Rogers Y.-H."/>
            <person name="Friedman R."/>
            <person name="Frazier M."/>
            <person name="Venter J.C."/>
        </authorList>
    </citation>
    <scope>NUCLEOTIDE SEQUENCE [LARGE SCALE GENOMIC DNA]</scope>
    <source>
        <strain>MJ11</strain>
    </source>
</reference>
<evidence type="ECO:0000255" key="1">
    <source>
        <dbReference type="HAMAP-Rule" id="MF_01850"/>
    </source>
</evidence>
<sequence length="307" mass="34701">MSELTKAQQYNFNKLQKKIRRNTGNAIADYNMIEDGDRIMVCLSGGKDSFTMLDILMSLKKSAPISFDLIAVNLDQKQPGFPAHILPEYLEKLGVEYKIVEEDTYSIVQDKIPEGKTTCSLCSRLRRGILYRTAKELGATKIALGHHRDDILETMFLNMFYGGKLKGMPPKLVSDNGEHVVIRPLAYCREKDIIKYADMRDYPIIPCNLCGSQPNMQRQNVKQMLNTWDKQFPGRIETMFTAMQNVVPSHLADFNTFDFKSINRDSGVINGGDIGFDKEEMPTLPVDADDAVAEFDPSLKLDVVNVD</sequence>